<dbReference type="EC" id="3.4.24.20"/>
<dbReference type="SMR" id="P81055"/>
<dbReference type="MEROPS" id="M35.004"/>
<dbReference type="VEuPathDB" id="FungiDB:PC9H_003251"/>
<dbReference type="VEuPathDB" id="FungiDB:PLEOSDRAFT_1037634"/>
<dbReference type="BRENDA" id="3.4.24.20">
    <property type="organism ID" value="4912"/>
</dbReference>
<dbReference type="GO" id="GO:0005576">
    <property type="term" value="C:extracellular region"/>
    <property type="evidence" value="ECO:0007669"/>
    <property type="project" value="UniProtKB-SubCell"/>
</dbReference>
<dbReference type="GO" id="GO:0046872">
    <property type="term" value="F:metal ion binding"/>
    <property type="evidence" value="ECO:0007669"/>
    <property type="project" value="UniProtKB-KW"/>
</dbReference>
<dbReference type="GO" id="GO:0004222">
    <property type="term" value="F:metalloendopeptidase activity"/>
    <property type="evidence" value="ECO:0007669"/>
    <property type="project" value="InterPro"/>
</dbReference>
<dbReference type="GO" id="GO:0006508">
    <property type="term" value="P:proteolysis"/>
    <property type="evidence" value="ECO:0007669"/>
    <property type="project" value="UniProtKB-KW"/>
</dbReference>
<dbReference type="CDD" id="cd11306">
    <property type="entry name" value="M35_peptidyl-Lys"/>
    <property type="match status" value="1"/>
</dbReference>
<dbReference type="Gene3D" id="3.40.390.10">
    <property type="entry name" value="Collagenase (Catalytic Domain)"/>
    <property type="match status" value="1"/>
</dbReference>
<dbReference type="InterPro" id="IPR050414">
    <property type="entry name" value="Fungal_M35_metalloproteases"/>
</dbReference>
<dbReference type="InterPro" id="IPR029463">
    <property type="entry name" value="Lys_MEP"/>
</dbReference>
<dbReference type="InterPro" id="IPR034115">
    <property type="entry name" value="M35_peptidyl-Lys"/>
</dbReference>
<dbReference type="InterPro" id="IPR024079">
    <property type="entry name" value="MetalloPept_cat_dom_sf"/>
</dbReference>
<dbReference type="PANTHER" id="PTHR37016">
    <property type="match status" value="1"/>
</dbReference>
<dbReference type="PANTHER" id="PTHR37016:SF3">
    <property type="entry name" value="NEUTRAL PROTEASE 2-RELATED"/>
    <property type="match status" value="1"/>
</dbReference>
<dbReference type="Pfam" id="PF14521">
    <property type="entry name" value="Aspzincin_M35"/>
    <property type="match status" value="1"/>
</dbReference>
<dbReference type="SMART" id="SM01351">
    <property type="entry name" value="Aspzincin_M35"/>
    <property type="match status" value="1"/>
</dbReference>
<dbReference type="SUPFAM" id="SSF55486">
    <property type="entry name" value="Metalloproteases ('zincins'), catalytic domain"/>
    <property type="match status" value="1"/>
</dbReference>
<reference key="1">
    <citation type="journal article" date="1997" name="J. Biol. Chem.">
        <title>Amino acid sequences of metalloendopeptidases specific for acyl-lysine bonds from Grifola frondosa and Pleurotus ostreatus fruiting bodies.</title>
        <authorList>
            <person name="Nonaka T."/>
            <person name="Dohmae N."/>
            <person name="Hashimoto Y."/>
            <person name="Takio K."/>
        </authorList>
    </citation>
    <scope>PROTEIN SEQUENCE</scope>
    <scope>MASS SPECTROMETRY</scope>
</reference>
<reference key="2">
    <citation type="journal article" date="1995" name="Biosci. Biotechnol. Biochem.">
        <title>Purification and characterization of intracellular proteinases in Pleurotus ostreatus fruiting bodies.</title>
        <authorList>
            <person name="Dohmae N."/>
            <person name="Hayashi K."/>
            <person name="Miki K."/>
            <person name="Tsumuraya Y."/>
            <person name="Hashimoto Y."/>
        </authorList>
    </citation>
    <scope>PROTEIN SEQUENCE OF 1-11</scope>
    <scope>ACTIVITY REGULATION</scope>
</reference>
<reference key="3">
    <citation type="journal article" date="1998" name="J. Biochem.">
        <title>Kinetic characterization of lysine-specific metalloendopeptidases from Grifola frondosa and Pleurotus ostreatus fruiting bodies.</title>
        <authorList>
            <person name="Nonaka T."/>
            <person name="Hashimoto Y."/>
            <person name="Takio K."/>
        </authorList>
    </citation>
    <scope>SUBSTRATE SPECIFICITY</scope>
</reference>
<reference key="4">
    <citation type="journal article" date="1998" name="Mycologia">
        <title>Purification and partial characterization of a fibrinolytic protease in Pleurotus ostreatus.</title>
        <authorList>
            <person name="Choi H.-S."/>
            <person name="Shin H.-H."/>
        </authorList>
        <dbReference type="AGRICOLA" id="IND21804865"/>
    </citation>
    <scope>ACTIVITY REGULATION</scope>
    <scope>ZINC-BINDING</scope>
    <scope>COFACTOR</scope>
</reference>
<keyword id="KW-0903">Direct protein sequencing</keyword>
<keyword id="KW-1015">Disulfide bond</keyword>
<keyword id="KW-0378">Hydrolase</keyword>
<keyword id="KW-0479">Metal-binding</keyword>
<keyword id="KW-0482">Metalloprotease</keyword>
<keyword id="KW-0645">Protease</keyword>
<keyword id="KW-0964">Secreted</keyword>
<keyword id="KW-0862">Zinc</keyword>
<evidence type="ECO:0000250" key="1"/>
<evidence type="ECO:0000250" key="2">
    <source>
        <dbReference type="UniProtKB" id="P81054"/>
    </source>
</evidence>
<evidence type="ECO:0000269" key="3">
    <source>
    </source>
</evidence>
<evidence type="ECO:0000269" key="4">
    <source>
    </source>
</evidence>
<evidence type="ECO:0000269" key="5">
    <source ref="4"/>
</evidence>
<evidence type="ECO:0000305" key="6"/>
<gene>
    <name type="primary">MEP</name>
</gene>
<name>PLMP_PLEOS</name>
<feature type="chain" id="PRO_0000078237" description="Peptidyl-Lys metalloendopeptidase">
    <location>
        <begin position="1"/>
        <end position="168"/>
    </location>
</feature>
<feature type="active site" evidence="2">
    <location>
        <position position="119"/>
    </location>
</feature>
<feature type="binding site" evidence="2">
    <location>
        <position position="118"/>
    </location>
    <ligand>
        <name>Zn(2+)</name>
        <dbReference type="ChEBI" id="CHEBI:29105"/>
        <note>catalytic</note>
    </ligand>
</feature>
<feature type="binding site" evidence="2">
    <location>
        <position position="122"/>
    </location>
    <ligand>
        <name>Zn(2+)</name>
        <dbReference type="ChEBI" id="CHEBI:29105"/>
        <note>catalytic</note>
    </ligand>
</feature>
<feature type="binding site" evidence="2">
    <location>
        <position position="131"/>
    </location>
    <ligand>
        <name>Zn(2+)</name>
        <dbReference type="ChEBI" id="CHEBI:29105"/>
        <note>catalytic</note>
    </ligand>
</feature>
<feature type="site" description="Transition state stabilizer" evidence="1">
    <location>
        <position position="134"/>
    </location>
</feature>
<feature type="disulfide bond" evidence="2">
    <location>
        <begin position="6"/>
        <end position="76"/>
    </location>
</feature>
<feature type="disulfide bond" evidence="2">
    <location>
        <begin position="78"/>
        <end position="98"/>
    </location>
</feature>
<organism>
    <name type="scientific">Pleurotus ostreatus</name>
    <name type="common">Oyster mushroom</name>
    <name type="synonym">White-rot fungus</name>
    <dbReference type="NCBI Taxonomy" id="5322"/>
    <lineage>
        <taxon>Eukaryota</taxon>
        <taxon>Fungi</taxon>
        <taxon>Dikarya</taxon>
        <taxon>Basidiomycota</taxon>
        <taxon>Agaricomycotina</taxon>
        <taxon>Agaricomycetes</taxon>
        <taxon>Agaricomycetidae</taxon>
        <taxon>Agaricales</taxon>
        <taxon>Pleurotineae</taxon>
        <taxon>Pleurotaceae</taxon>
        <taxon>Pleurotus</taxon>
    </lineage>
</organism>
<accession>P81055</accession>
<proteinExistence type="evidence at protein level"/>
<sequence length="168" mass="17925">ATFVGCSATRQTQLNAAASQAQTYAANALSYLNSHTSSTTRYTTWFGTFVTSRYNTVLSHFSSISSNTFSSYTFDCTCSDSGTYAFVNPSNFGYVTLCGAFWNAPVAGTDSRGGTLIHESSHFTRNGGTDDHVYGQAGAQSLARSNPAQAIDNADSHEYFAENNPALA</sequence>
<comment type="catalytic activity">
    <reaction>
        <text>Preferential cleavage in proteins: -Xaa-|-Lys- (in which Xaa may be Pro).</text>
        <dbReference type="EC" id="3.4.24.20"/>
    </reaction>
</comment>
<comment type="cofactor">
    <cofactor evidence="5">
        <name>Zn(2+)</name>
        <dbReference type="ChEBI" id="CHEBI:29105"/>
    </cofactor>
    <text evidence="5">Binds 1 zinc ion per subunit.</text>
</comment>
<comment type="activity regulation">
    <text evidence="3 5">Inhibited by chelating agents such as EDTA and 1,10-phenanthroline.</text>
</comment>
<comment type="subcellular location">
    <subcellularLocation>
        <location>Secreted</location>
    </subcellularLocation>
    <text evidence="1">Binds strongly to beta-1,3-glucan and chitin, major polysaccharides constituting the fungal cell wall.</text>
</comment>
<comment type="mass spectrometry" mass="17927.0" method="MALDI" evidence="4"/>
<comment type="similarity">
    <text evidence="6">Belongs to the peptidase M35 family.</text>
</comment>
<protein>
    <recommendedName>
        <fullName>Peptidyl-Lys metalloendopeptidase</fullName>
        <shortName>MEP</shortName>
        <ecNumber>3.4.24.20</ecNumber>
    </recommendedName>
    <alternativeName>
        <fullName>PoMEP</fullName>
    </alternativeName>
</protein>